<gene>
    <name evidence="1" type="primary">rpmH</name>
    <name type="ordered locus">BC_5490</name>
</gene>
<sequence>MKRTYQPNKRKRSKVHGFRSRMSTANGRKVLAARRRKGRKVLSA</sequence>
<organism>
    <name type="scientific">Bacillus cereus (strain ATCC 14579 / DSM 31 / CCUG 7414 / JCM 2152 / NBRC 15305 / NCIMB 9373 / NCTC 2599 / NRRL B-3711)</name>
    <dbReference type="NCBI Taxonomy" id="226900"/>
    <lineage>
        <taxon>Bacteria</taxon>
        <taxon>Bacillati</taxon>
        <taxon>Bacillota</taxon>
        <taxon>Bacilli</taxon>
        <taxon>Bacillales</taxon>
        <taxon>Bacillaceae</taxon>
        <taxon>Bacillus</taxon>
        <taxon>Bacillus cereus group</taxon>
    </lineage>
</organism>
<reference key="1">
    <citation type="journal article" date="2003" name="Nature">
        <title>Genome sequence of Bacillus cereus and comparative analysis with Bacillus anthracis.</title>
        <authorList>
            <person name="Ivanova N."/>
            <person name="Sorokin A."/>
            <person name="Anderson I."/>
            <person name="Galleron N."/>
            <person name="Candelon B."/>
            <person name="Kapatral V."/>
            <person name="Bhattacharyya A."/>
            <person name="Reznik G."/>
            <person name="Mikhailova N."/>
            <person name="Lapidus A."/>
            <person name="Chu L."/>
            <person name="Mazur M."/>
            <person name="Goltsman E."/>
            <person name="Larsen N."/>
            <person name="D'Souza M."/>
            <person name="Walunas T."/>
            <person name="Grechkin Y."/>
            <person name="Pusch G."/>
            <person name="Haselkorn R."/>
            <person name="Fonstein M."/>
            <person name="Ehrlich S.D."/>
            <person name="Overbeek R."/>
            <person name="Kyrpides N.C."/>
        </authorList>
    </citation>
    <scope>NUCLEOTIDE SEQUENCE [LARGE SCALE GENOMIC DNA]</scope>
    <source>
        <strain>ATCC 14579 / DSM 31 / CCUG 7414 / JCM 2152 / NBRC 15305 / NCIMB 9373 / NCTC 2599 / NRRL B-3711</strain>
    </source>
</reference>
<feature type="chain" id="PRO_1000013279" description="Large ribosomal subunit protein bL34">
    <location>
        <begin position="1"/>
        <end position="44"/>
    </location>
</feature>
<feature type="region of interest" description="Disordered" evidence="2">
    <location>
        <begin position="1"/>
        <end position="44"/>
    </location>
</feature>
<feature type="compositionally biased region" description="Basic residues" evidence="2">
    <location>
        <begin position="1"/>
        <end position="19"/>
    </location>
</feature>
<feature type="compositionally biased region" description="Basic residues" evidence="2">
    <location>
        <begin position="31"/>
        <end position="44"/>
    </location>
</feature>
<name>RL34_BACCR</name>
<proteinExistence type="inferred from homology"/>
<comment type="similarity">
    <text evidence="1">Belongs to the bacterial ribosomal protein bL34 family.</text>
</comment>
<keyword id="KW-1185">Reference proteome</keyword>
<keyword id="KW-0687">Ribonucleoprotein</keyword>
<keyword id="KW-0689">Ribosomal protein</keyword>
<dbReference type="EMBL" id="AE016877">
    <property type="protein sequence ID" value="AAP12344.1"/>
    <property type="molecule type" value="Genomic_DNA"/>
</dbReference>
<dbReference type="RefSeq" id="NP_835143.1">
    <property type="nucleotide sequence ID" value="NC_004722.1"/>
</dbReference>
<dbReference type="RefSeq" id="WP_000831901.1">
    <property type="nucleotide sequence ID" value="NZ_CP138336.1"/>
</dbReference>
<dbReference type="SMR" id="Q814F2"/>
<dbReference type="STRING" id="226900.BC_5490"/>
<dbReference type="GeneID" id="93005634"/>
<dbReference type="KEGG" id="bce:BC5490"/>
<dbReference type="PATRIC" id="fig|226900.8.peg.5668"/>
<dbReference type="HOGENOM" id="CLU_129938_2_0_9"/>
<dbReference type="OrthoDB" id="9804164at2"/>
<dbReference type="PRO" id="PR:Q814F2"/>
<dbReference type="Proteomes" id="UP000001417">
    <property type="component" value="Chromosome"/>
</dbReference>
<dbReference type="GO" id="GO:1990904">
    <property type="term" value="C:ribonucleoprotein complex"/>
    <property type="evidence" value="ECO:0007669"/>
    <property type="project" value="UniProtKB-KW"/>
</dbReference>
<dbReference type="GO" id="GO:0005840">
    <property type="term" value="C:ribosome"/>
    <property type="evidence" value="ECO:0007669"/>
    <property type="project" value="UniProtKB-KW"/>
</dbReference>
<dbReference type="GO" id="GO:0003735">
    <property type="term" value="F:structural constituent of ribosome"/>
    <property type="evidence" value="ECO:0007669"/>
    <property type="project" value="InterPro"/>
</dbReference>
<dbReference type="GO" id="GO:0006412">
    <property type="term" value="P:translation"/>
    <property type="evidence" value="ECO:0007669"/>
    <property type="project" value="UniProtKB-UniRule"/>
</dbReference>
<dbReference type="FunFam" id="1.10.287.3980:FF:000001">
    <property type="entry name" value="Mitochondrial ribosomal protein L34"/>
    <property type="match status" value="1"/>
</dbReference>
<dbReference type="Gene3D" id="1.10.287.3980">
    <property type="match status" value="1"/>
</dbReference>
<dbReference type="HAMAP" id="MF_00391">
    <property type="entry name" value="Ribosomal_bL34"/>
    <property type="match status" value="1"/>
</dbReference>
<dbReference type="InterPro" id="IPR000271">
    <property type="entry name" value="Ribosomal_bL34"/>
</dbReference>
<dbReference type="InterPro" id="IPR020939">
    <property type="entry name" value="Ribosomal_bL34_CS"/>
</dbReference>
<dbReference type="NCBIfam" id="TIGR01030">
    <property type="entry name" value="rpmH_bact"/>
    <property type="match status" value="1"/>
</dbReference>
<dbReference type="PANTHER" id="PTHR14503:SF4">
    <property type="entry name" value="LARGE RIBOSOMAL SUBUNIT PROTEIN BL34M"/>
    <property type="match status" value="1"/>
</dbReference>
<dbReference type="PANTHER" id="PTHR14503">
    <property type="entry name" value="MITOCHONDRIAL RIBOSOMAL PROTEIN 34 FAMILY MEMBER"/>
    <property type="match status" value="1"/>
</dbReference>
<dbReference type="Pfam" id="PF00468">
    <property type="entry name" value="Ribosomal_L34"/>
    <property type="match status" value="1"/>
</dbReference>
<dbReference type="PROSITE" id="PS00784">
    <property type="entry name" value="RIBOSOMAL_L34"/>
    <property type="match status" value="1"/>
</dbReference>
<protein>
    <recommendedName>
        <fullName evidence="1">Large ribosomal subunit protein bL34</fullName>
    </recommendedName>
    <alternativeName>
        <fullName evidence="3">50S ribosomal protein L34</fullName>
    </alternativeName>
</protein>
<accession>Q814F2</accession>
<evidence type="ECO:0000255" key="1">
    <source>
        <dbReference type="HAMAP-Rule" id="MF_00391"/>
    </source>
</evidence>
<evidence type="ECO:0000256" key="2">
    <source>
        <dbReference type="SAM" id="MobiDB-lite"/>
    </source>
</evidence>
<evidence type="ECO:0000305" key="3"/>